<comment type="function">
    <text evidence="5 6">Telomerase is a ribonucleoprotein enzyme essential for the replication of chromosome termini in most eukaryotes. It elongates telomeres. It is a reverse transcriptase that adds simple sequence repeats to chromosome ends by copying a template sequence within the RNA component of the enzyme.</text>
</comment>
<comment type="catalytic activity">
    <reaction evidence="1">
        <text>DNA(n) + a 2'-deoxyribonucleoside 5'-triphosphate = DNA(n+1) + diphosphate</text>
        <dbReference type="Rhea" id="RHEA:22508"/>
        <dbReference type="Rhea" id="RHEA-COMP:17339"/>
        <dbReference type="Rhea" id="RHEA-COMP:17340"/>
        <dbReference type="ChEBI" id="CHEBI:33019"/>
        <dbReference type="ChEBI" id="CHEBI:61560"/>
        <dbReference type="ChEBI" id="CHEBI:173112"/>
        <dbReference type="EC" id="2.7.7.49"/>
    </reaction>
</comment>
<comment type="subunit">
    <text evidence="2 3">Component of the telomerase holoenzyme complex composed minimally of the catalytic subunit p123 and the telomerase RNA template component.</text>
</comment>
<comment type="subcellular location">
    <subcellularLocation>
        <location evidence="4">Nucleus</location>
    </subcellularLocation>
    <subcellularLocation>
        <location evidence="4">Chromosome</location>
        <location evidence="4">Telomere</location>
    </subcellularLocation>
</comment>
<comment type="similarity">
    <text evidence="4">Belongs to the reverse transcriptase family. Telomerase subfamily.</text>
</comment>
<proteinExistence type="evidence at protein level"/>
<dbReference type="EC" id="2.7.7.49"/>
<dbReference type="EMBL" id="U95964">
    <property type="protein sequence ID" value="AAC47515.1"/>
    <property type="molecule type" value="Genomic_DNA"/>
</dbReference>
<dbReference type="SMR" id="O00939"/>
<dbReference type="GO" id="GO:0000781">
    <property type="term" value="C:chromosome, telomeric region"/>
    <property type="evidence" value="ECO:0007669"/>
    <property type="project" value="UniProtKB-SubCell"/>
</dbReference>
<dbReference type="GO" id="GO:0000333">
    <property type="term" value="C:telomerase catalytic core complex"/>
    <property type="evidence" value="ECO:0007669"/>
    <property type="project" value="TreeGrafter"/>
</dbReference>
<dbReference type="GO" id="GO:0046872">
    <property type="term" value="F:metal ion binding"/>
    <property type="evidence" value="ECO:0007669"/>
    <property type="project" value="UniProtKB-KW"/>
</dbReference>
<dbReference type="GO" id="GO:0003720">
    <property type="term" value="F:telomerase activity"/>
    <property type="evidence" value="ECO:0007669"/>
    <property type="project" value="InterPro"/>
</dbReference>
<dbReference type="GO" id="GO:0070034">
    <property type="term" value="F:telomerase RNA binding"/>
    <property type="evidence" value="ECO:0007669"/>
    <property type="project" value="TreeGrafter"/>
</dbReference>
<dbReference type="GO" id="GO:0042162">
    <property type="term" value="F:telomeric DNA binding"/>
    <property type="evidence" value="ECO:0007669"/>
    <property type="project" value="TreeGrafter"/>
</dbReference>
<dbReference type="GO" id="GO:0007004">
    <property type="term" value="P:telomere maintenance via telomerase"/>
    <property type="evidence" value="ECO:0007669"/>
    <property type="project" value="TreeGrafter"/>
</dbReference>
<dbReference type="CDD" id="cd01648">
    <property type="entry name" value="TERT"/>
    <property type="match status" value="1"/>
</dbReference>
<dbReference type="Gene3D" id="1.10.132.70">
    <property type="match status" value="1"/>
</dbReference>
<dbReference type="Gene3D" id="1.10.10.1970">
    <property type="entry name" value="TERT catalytic subunit-like"/>
    <property type="match status" value="1"/>
</dbReference>
<dbReference type="InterPro" id="IPR043502">
    <property type="entry name" value="DNA/RNA_pol_sf"/>
</dbReference>
<dbReference type="InterPro" id="IPR000477">
    <property type="entry name" value="RT_dom"/>
</dbReference>
<dbReference type="InterPro" id="IPR021891">
    <property type="entry name" value="Telomerase_RBD"/>
</dbReference>
<dbReference type="InterPro" id="IPR003545">
    <property type="entry name" value="Telomerase_RT"/>
</dbReference>
<dbReference type="PANTHER" id="PTHR12066">
    <property type="entry name" value="TELOMERASE REVERSE TRANSCRIPTASE"/>
    <property type="match status" value="1"/>
</dbReference>
<dbReference type="PANTHER" id="PTHR12066:SF0">
    <property type="entry name" value="TELOMERASE REVERSE TRANSCRIPTASE"/>
    <property type="match status" value="1"/>
</dbReference>
<dbReference type="Pfam" id="PF00078">
    <property type="entry name" value="RVT_1"/>
    <property type="match status" value="1"/>
</dbReference>
<dbReference type="Pfam" id="PF12009">
    <property type="entry name" value="Telomerase_RBD"/>
    <property type="match status" value="1"/>
</dbReference>
<dbReference type="PRINTS" id="PR01365">
    <property type="entry name" value="TELOMERASERT"/>
</dbReference>
<dbReference type="SMART" id="SM00975">
    <property type="entry name" value="Telomerase_RBD"/>
    <property type="match status" value="1"/>
</dbReference>
<dbReference type="SUPFAM" id="SSF56672">
    <property type="entry name" value="DNA/RNA polymerases"/>
    <property type="match status" value="1"/>
</dbReference>
<dbReference type="PROSITE" id="PS50878">
    <property type="entry name" value="RT_POL"/>
    <property type="match status" value="1"/>
</dbReference>
<evidence type="ECO:0000255" key="1">
    <source>
        <dbReference type="PROSITE-ProRule" id="PRU00405"/>
    </source>
</evidence>
<evidence type="ECO:0000269" key="2">
    <source>
    </source>
</evidence>
<evidence type="ECO:0000269" key="3">
    <source>
    </source>
</evidence>
<evidence type="ECO:0000305" key="4"/>
<evidence type="ECO:0000305" key="5">
    <source>
    </source>
</evidence>
<evidence type="ECO:0000305" key="6">
    <source>
    </source>
</evidence>
<organism>
    <name type="scientific">Euplotes aediculatus</name>
    <name type="common">Ciliate</name>
    <dbReference type="NCBI Taxonomy" id="5940"/>
    <lineage>
        <taxon>Eukaryota</taxon>
        <taxon>Sar</taxon>
        <taxon>Alveolata</taxon>
        <taxon>Ciliophora</taxon>
        <taxon>Intramacronucleata</taxon>
        <taxon>Spirotrichea</taxon>
        <taxon>Hypotrichia</taxon>
        <taxon>Euplotida</taxon>
        <taxon>Euplotidae</taxon>
        <taxon>Euplotes</taxon>
    </lineage>
</organism>
<feature type="chain" id="PRO_0000054927" description="Telomerase reverse transcriptase">
    <location>
        <begin position="1"/>
        <end position="1031"/>
    </location>
</feature>
<feature type="domain" description="Reverse transcriptase" evidence="1">
    <location>
        <begin position="498"/>
        <end position="852"/>
    </location>
</feature>
<feature type="binding site" evidence="1">
    <location>
        <position position="603"/>
    </location>
    <ligand>
        <name>Mg(2+)</name>
        <dbReference type="ChEBI" id="CHEBI:18420"/>
        <note>catalytic</note>
    </ligand>
</feature>
<feature type="binding site" evidence="1">
    <location>
        <position position="781"/>
    </location>
    <ligand>
        <name>Mg(2+)</name>
        <dbReference type="ChEBI" id="CHEBI:18420"/>
        <note>catalytic</note>
    </ligand>
</feature>
<feature type="binding site" evidence="1">
    <location>
        <position position="782"/>
    </location>
    <ligand>
        <name>Mg(2+)</name>
        <dbReference type="ChEBI" id="CHEBI:18420"/>
        <note>catalytic</note>
    </ligand>
</feature>
<reference key="1">
    <citation type="journal article" date="1997" name="Science">
        <title>Reverse transcriptase motifs in the catalytic subunit of telomerase.</title>
        <authorList>
            <person name="Lingner J."/>
            <person name="Hughes T.R."/>
            <person name="Shevchenko A."/>
            <person name="Mann M."/>
            <person name="Lundblad V."/>
            <person name="Cech T.R."/>
        </authorList>
    </citation>
    <scope>NUCLEOTIDE SEQUENCE [GENOMIC DNA]</scope>
</reference>
<reference key="2">
    <citation type="journal article" date="2000" name="EMBO J.">
        <title>Euplotes telomerase contains an La motif protein produced by apparent translational frameshifting.</title>
        <authorList>
            <person name="Aigner S."/>
            <person name="Lingner J."/>
            <person name="Goodrich K.J."/>
            <person name="Grosshans C.A."/>
            <person name="Shevchenko A."/>
            <person name="Mann M."/>
            <person name="Cech T.R."/>
        </authorList>
    </citation>
    <scope>FUNCTION</scope>
    <scope>IDENTIFICATION IN THE TELOMERASE HOLOENZYME COMPLEX</scope>
</reference>
<reference key="3">
    <citation type="journal article" date="2003" name="J. Cell Sci.">
        <title>The telomerase-associated protein p43 is involved in anchoring telomerase in the nucleus.</title>
        <authorList>
            <person name="Moellenbeck M."/>
            <person name="Postberg J."/>
            <person name="Paeschke K."/>
            <person name="Rossbach M."/>
            <person name="Joensson F."/>
            <person name="Lipps H.J."/>
        </authorList>
    </citation>
    <scope>FUNCTION</scope>
    <scope>IDENTIFICATION IN THE TELOMERASE HOLOENZYME COMPLEX</scope>
</reference>
<protein>
    <recommendedName>
        <fullName>Telomerase reverse transcriptase</fullName>
        <ecNumber>2.7.7.49</ecNumber>
    </recommendedName>
    <alternativeName>
        <fullName>Telomerase catalytic subunit</fullName>
    </alternativeName>
    <alternativeName>
        <fullName>Telomerase subunit P123</fullName>
    </alternativeName>
</protein>
<name>TERT_EUPAE</name>
<accession>O00939</accession>
<sequence>MEVDVDNQADNHGIHSALKTCEEIKEAKTLYSWIQKVIRCRNQSQSHYKDLEDIKIFAQTNIVATPRDYNEEDFKVIARKEVFSTGLMIELIDKCLVELLSSSDVSDRQKLQCFGFQLKGNQLAKTHLLTALSTQKQYFFQDEWNQVRAMIGNELFRHLYTKYLIFQRTSEGTLVQFCGNNVFDHLKVNDKFDKKQKGGAADMNEPRCCSTCKYNVKNEKDHFLNNINVPNWNNMKSRTRIFYCTHFNRNNQFFKKHEFVSNKNNISAMDRAQTIFTNIFRFNRIRKKLKDKVIEKIAYMLEKVKDFNFNYYLTKSCPLPENWRERKQKIENLINKTREEKSKYYEELFSYTTDNKCVTQFINEFFYNILPKDFLTGRNRKNFQKKVKKYVELNKHELIHKNLLLEKINTREISWMQVETSAKHFYYFDHENIYVLWKLLRWIFEDLVVSLIRCFFYVTEQQKSYSKTYYYRKNIWDVIMKMSIADLKKETLAEVQEKEVEEWKKSLGFAPGKLRLIPKKTTFRPIMTFNKKIVNSDRKTTKLTTNTKLLNSHLMLKTLKNRMFKDPFGFAVFNYDDVMKKYEEFVCKWKQVGQPKLFFATMDIEKCYDSVNREKLSTFLKTTKLLSSDFWIMTAQILKRKNNIVIDSKNFRKKEMKDYFRQKFQKIALEGGQYPTLFSVLENEQNDLNAKKTLIVEAKQRNYFKKDNLLQPVINICQYNYINFNGKFYKQTKGIPQGLCVSSILSSFYYATLEESSLGFLRDESMNPENPNVNLLMRLTDDYLLITTQENNAVLFIEKLINVSRENGFKFNMKKLQTSFPLSPSKFAKYGMDSVEEQNIVQDYCDWIGISIDMKTLALMPNINLRIEGILCTLNLNMQTKKASMWLKKKLKSFLMNNITHYFRKTITTEDFANKTLNKLFISGGYKYMQCAKEYKDHFKKNLAMSSMIDLEVSKIIYSVTRAFFKYLVCNIKDTIFGEEHYPDFFLSTLKHFIEIFSTKKYIFNRVCMILKAKEAKLKSDQCQSLIQYDA</sequence>
<keyword id="KW-0158">Chromosome</keyword>
<keyword id="KW-0238">DNA-binding</keyword>
<keyword id="KW-0460">Magnesium</keyword>
<keyword id="KW-0479">Metal-binding</keyword>
<keyword id="KW-0548">Nucleotidyltransferase</keyword>
<keyword id="KW-0539">Nucleus</keyword>
<keyword id="KW-0695">RNA-directed DNA polymerase</keyword>
<keyword id="KW-0779">Telomere</keyword>
<keyword id="KW-0808">Transferase</keyword>